<keyword id="KW-1185">Reference proteome</keyword>
<proteinExistence type="predicted"/>
<sequence length="157" mass="18124">MTDFKQLLFRAGFMNFGKLDRRAAMEFLFINSERTLERWIAENKPCPRAVAMLKQRINGGMALHKDWGGFYICRGGYLWTPRGKKYDASYINKLDFLQSSVRYNESHVNALQNQIDHLHDLVAASETLKTIGNDLIKMSDSLALKEIVMKYGDKQRA</sequence>
<feature type="chain" id="PRO_0000339910" description="Uncharacterized protein Gp-a">
    <location>
        <begin position="1"/>
        <end position="157"/>
    </location>
</feature>
<protein>
    <recommendedName>
        <fullName>Uncharacterized protein Gp-a</fullName>
    </recommendedName>
</protein>
<accession>Q9XJS8</accession>
<organismHost>
    <name type="scientific">Pseudoalteromonas espejiana</name>
    <dbReference type="NCBI Taxonomy" id="28107"/>
</organismHost>
<organism>
    <name type="scientific">Pseudoalteromonas phage PM2</name>
    <name type="common">Bacteriophage PM2</name>
    <dbReference type="NCBI Taxonomy" id="2905728"/>
    <lineage>
        <taxon>Viruses</taxon>
        <taxon>Varidnaviria</taxon>
        <taxon>Bamfordvirae</taxon>
        <taxon>Preplasmiviricota</taxon>
        <taxon>Tectiliviricetes</taxon>
        <taxon>Vinavirales</taxon>
        <taxon>Corticoviridae</taxon>
        <taxon>Corticovirus</taxon>
        <taxon>Corticovirus PM2</taxon>
    </lineage>
</organism>
<gene>
    <name type="ORF">a</name>
</gene>
<name>GPA_BPPM2</name>
<dbReference type="EMBL" id="AF155037">
    <property type="protein sequence ID" value="AAD43538.1"/>
    <property type="molecule type" value="Genomic_DNA"/>
</dbReference>
<dbReference type="RefSeq" id="NP_049890.1">
    <property type="nucleotide sequence ID" value="NC_000867.1"/>
</dbReference>
<dbReference type="SMR" id="Q9XJS8"/>
<dbReference type="KEGG" id="vg:1262031"/>
<dbReference type="Proteomes" id="UP000002136">
    <property type="component" value="Genome"/>
</dbReference>
<reference key="1">
    <citation type="journal article" date="1999" name="Virology">
        <title>The complete genome sequence of PM2, the first lipid-containing bacterial virus to be isolated.</title>
        <authorList>
            <person name="Maennistoe R.H."/>
            <person name="Kivelae H.M."/>
            <person name="Paulin L."/>
            <person name="Bamford D.H."/>
            <person name="Bamford J.K."/>
        </authorList>
    </citation>
    <scope>NUCLEOTIDE SEQUENCE [GENOMIC DNA]</scope>
</reference>